<organism>
    <name type="scientific">Streptococcus pyogenes serotype M3 (strain ATCC BAA-595 / MGAS315)</name>
    <dbReference type="NCBI Taxonomy" id="198466"/>
    <lineage>
        <taxon>Bacteria</taxon>
        <taxon>Bacillati</taxon>
        <taxon>Bacillota</taxon>
        <taxon>Bacilli</taxon>
        <taxon>Lactobacillales</taxon>
        <taxon>Streptococcaceae</taxon>
        <taxon>Streptococcus</taxon>
    </lineage>
</organism>
<gene>
    <name evidence="1" type="primary">mutS</name>
    <name type="ordered locus">SpyM3_1806</name>
</gene>
<feature type="chain" id="PRO_0000115150" description="DNA mismatch repair protein MutS">
    <location>
        <begin position="1"/>
        <end position="851"/>
    </location>
</feature>
<feature type="binding site" evidence="1">
    <location>
        <begin position="602"/>
        <end position="609"/>
    </location>
    <ligand>
        <name>ATP</name>
        <dbReference type="ChEBI" id="CHEBI:30616"/>
    </ligand>
</feature>
<sequence length="851" mass="95487">MAKTNISPGMQQYLDIKKDYPDAFLLFRMGDFYELFYEDAVKAAQLLEIGLTSRNKNAENPIPMAGVPHHSAQQYIDVLIELGYKVAVAEQMEDPKQAVGVVKREVVQVITPGTVVDSAKPDSANNFLVAVDFDGCRYGLAYMDVSTGEFCVTDLADFTSVRSEIQNLKAKEVLLGFDLSEEEQTILVKQMNLLLSYEETVYEDKSLIDGQLTTVELTAAGKLLQYVHKTQMRELSHLQALVHYEIKDYLQMSYATKSSLDLVENARTNKKHGSLYWLLDETKTAMGMRLLRSWIDRPLVSKEAILERQEIIQVFLNAFIERTDLSNSLKGVYDIERLSSRVSFGKANPKDLLQLGHTLAQVPYIKAILESFDSPCVDKLVNDIDSLPELEYLIRTAIDPDAPATISEGSIIRNGFDERLDHYRKVMREGTGWIADIEAKERQASGINNLKIDYNKKDGYYFHVTNSNLSLVPEHFFRKATLKNSERYGTAELAKIEGQMLEAREESSSLEYDIFMCIRAQVETYINRLQKLAKILATVDVLQSLAVVAETNHYIRPQFNDNHVITIQEGRHAVVEKVMGVQEYIPNSISFDQQTSIQLITGPNMSGKSTYMRQLALTVIMAQMGSFVAADHVDLPLFDAIFTRIGAADDLISGQSTFMVEMMEANQAIKRASDNSLILFDELGRGTATYDGMALAQAIIEYIHDRVGAKTIFATHYHELTDLSTKLTSLVNVHVATLEKDGDVTFLHKIAEGPADKSYGIHVAKIAGLPKSLLKRADEVLTRLETQSRSTEIISVPSQVESSSAVRQGQLSLFGDEEKTHEIRQALEAIDVMNMTPLQAMTTLYELKKLL</sequence>
<reference key="1">
    <citation type="journal article" date="2002" name="Proc. Natl. Acad. Sci. U.S.A.">
        <title>Genome sequence of a serotype M3 strain of group A Streptococcus: phage-encoded toxins, the high-virulence phenotype, and clone emergence.</title>
        <authorList>
            <person name="Beres S.B."/>
            <person name="Sylva G.L."/>
            <person name="Barbian K.D."/>
            <person name="Lei B."/>
            <person name="Hoff J.S."/>
            <person name="Mammarella N.D."/>
            <person name="Liu M.-Y."/>
            <person name="Smoot J.C."/>
            <person name="Porcella S.F."/>
            <person name="Parkins L.D."/>
            <person name="Campbell D.S."/>
            <person name="Smith T.M."/>
            <person name="McCormick J.K."/>
            <person name="Leung D.Y.M."/>
            <person name="Schlievert P.M."/>
            <person name="Musser J.M."/>
        </authorList>
    </citation>
    <scope>NUCLEOTIDE SEQUENCE [LARGE SCALE GENOMIC DNA]</scope>
    <source>
        <strain>ATCC BAA-595 / MGAS315</strain>
    </source>
</reference>
<comment type="function">
    <text evidence="1">This protein is involved in the repair of mismatches in DNA. It is possible that it carries out the mismatch recognition step. This protein has a weak ATPase activity.</text>
</comment>
<comment type="similarity">
    <text evidence="1">Belongs to the DNA mismatch repair MutS family.</text>
</comment>
<dbReference type="EMBL" id="AE014074">
    <property type="protein sequence ID" value="AAM80413.1"/>
    <property type="molecule type" value="Genomic_DNA"/>
</dbReference>
<dbReference type="RefSeq" id="WP_011055091.1">
    <property type="nucleotide sequence ID" value="NC_004070.1"/>
</dbReference>
<dbReference type="SMR" id="P0DC60"/>
<dbReference type="KEGG" id="spg:SpyM3_1806"/>
<dbReference type="HOGENOM" id="CLU_002472_3_1_9"/>
<dbReference type="Proteomes" id="UP000000564">
    <property type="component" value="Chromosome"/>
</dbReference>
<dbReference type="GO" id="GO:0005829">
    <property type="term" value="C:cytosol"/>
    <property type="evidence" value="ECO:0007669"/>
    <property type="project" value="TreeGrafter"/>
</dbReference>
<dbReference type="GO" id="GO:0005524">
    <property type="term" value="F:ATP binding"/>
    <property type="evidence" value="ECO:0007669"/>
    <property type="project" value="UniProtKB-UniRule"/>
</dbReference>
<dbReference type="GO" id="GO:0140664">
    <property type="term" value="F:ATP-dependent DNA damage sensor activity"/>
    <property type="evidence" value="ECO:0007669"/>
    <property type="project" value="InterPro"/>
</dbReference>
<dbReference type="GO" id="GO:0003684">
    <property type="term" value="F:damaged DNA binding"/>
    <property type="evidence" value="ECO:0007669"/>
    <property type="project" value="UniProtKB-UniRule"/>
</dbReference>
<dbReference type="GO" id="GO:0030983">
    <property type="term" value="F:mismatched DNA binding"/>
    <property type="evidence" value="ECO:0007669"/>
    <property type="project" value="InterPro"/>
</dbReference>
<dbReference type="GO" id="GO:0006298">
    <property type="term" value="P:mismatch repair"/>
    <property type="evidence" value="ECO:0007669"/>
    <property type="project" value="UniProtKB-UniRule"/>
</dbReference>
<dbReference type="CDD" id="cd03284">
    <property type="entry name" value="ABC_MutS1"/>
    <property type="match status" value="1"/>
</dbReference>
<dbReference type="FunFam" id="1.10.1420.10:FF:000001">
    <property type="entry name" value="DNA mismatch repair protein MutS"/>
    <property type="match status" value="1"/>
</dbReference>
<dbReference type="FunFam" id="3.40.1170.10:FF:000001">
    <property type="entry name" value="DNA mismatch repair protein MutS"/>
    <property type="match status" value="1"/>
</dbReference>
<dbReference type="FunFam" id="3.40.50.300:FF:000896">
    <property type="entry name" value="DNA mismatch repair protein MutS"/>
    <property type="match status" value="1"/>
</dbReference>
<dbReference type="Gene3D" id="1.10.1420.10">
    <property type="match status" value="2"/>
</dbReference>
<dbReference type="Gene3D" id="3.40.1170.10">
    <property type="entry name" value="DNA repair protein MutS, domain I"/>
    <property type="match status" value="1"/>
</dbReference>
<dbReference type="Gene3D" id="3.30.420.110">
    <property type="entry name" value="MutS, connector domain"/>
    <property type="match status" value="1"/>
</dbReference>
<dbReference type="Gene3D" id="3.40.50.300">
    <property type="entry name" value="P-loop containing nucleotide triphosphate hydrolases"/>
    <property type="match status" value="1"/>
</dbReference>
<dbReference type="HAMAP" id="MF_00096">
    <property type="entry name" value="MutS"/>
    <property type="match status" value="1"/>
</dbReference>
<dbReference type="InterPro" id="IPR005748">
    <property type="entry name" value="DNA_mismatch_repair_MutS"/>
</dbReference>
<dbReference type="InterPro" id="IPR007695">
    <property type="entry name" value="DNA_mismatch_repair_MutS-lik_N"/>
</dbReference>
<dbReference type="InterPro" id="IPR017261">
    <property type="entry name" value="DNA_mismatch_repair_MutS/MSH"/>
</dbReference>
<dbReference type="InterPro" id="IPR000432">
    <property type="entry name" value="DNA_mismatch_repair_MutS_C"/>
</dbReference>
<dbReference type="InterPro" id="IPR007861">
    <property type="entry name" value="DNA_mismatch_repair_MutS_clamp"/>
</dbReference>
<dbReference type="InterPro" id="IPR007696">
    <property type="entry name" value="DNA_mismatch_repair_MutS_core"/>
</dbReference>
<dbReference type="InterPro" id="IPR016151">
    <property type="entry name" value="DNA_mismatch_repair_MutS_N"/>
</dbReference>
<dbReference type="InterPro" id="IPR036187">
    <property type="entry name" value="DNA_mismatch_repair_MutS_sf"/>
</dbReference>
<dbReference type="InterPro" id="IPR007860">
    <property type="entry name" value="DNA_mmatch_repair_MutS_con_dom"/>
</dbReference>
<dbReference type="InterPro" id="IPR045076">
    <property type="entry name" value="MutS"/>
</dbReference>
<dbReference type="InterPro" id="IPR036678">
    <property type="entry name" value="MutS_con_dom_sf"/>
</dbReference>
<dbReference type="InterPro" id="IPR027417">
    <property type="entry name" value="P-loop_NTPase"/>
</dbReference>
<dbReference type="NCBIfam" id="TIGR01070">
    <property type="entry name" value="mutS1"/>
    <property type="match status" value="1"/>
</dbReference>
<dbReference type="NCBIfam" id="NF003810">
    <property type="entry name" value="PRK05399.1"/>
    <property type="match status" value="1"/>
</dbReference>
<dbReference type="PANTHER" id="PTHR11361:SF34">
    <property type="entry name" value="DNA MISMATCH REPAIR PROTEIN MSH1, MITOCHONDRIAL"/>
    <property type="match status" value="1"/>
</dbReference>
<dbReference type="PANTHER" id="PTHR11361">
    <property type="entry name" value="DNA MISMATCH REPAIR PROTEIN MUTS FAMILY MEMBER"/>
    <property type="match status" value="1"/>
</dbReference>
<dbReference type="Pfam" id="PF01624">
    <property type="entry name" value="MutS_I"/>
    <property type="match status" value="1"/>
</dbReference>
<dbReference type="Pfam" id="PF05188">
    <property type="entry name" value="MutS_II"/>
    <property type="match status" value="1"/>
</dbReference>
<dbReference type="Pfam" id="PF05192">
    <property type="entry name" value="MutS_III"/>
    <property type="match status" value="1"/>
</dbReference>
<dbReference type="Pfam" id="PF05190">
    <property type="entry name" value="MutS_IV"/>
    <property type="match status" value="1"/>
</dbReference>
<dbReference type="Pfam" id="PF00488">
    <property type="entry name" value="MutS_V"/>
    <property type="match status" value="1"/>
</dbReference>
<dbReference type="PIRSF" id="PIRSF037677">
    <property type="entry name" value="DNA_mis_repair_Msh6"/>
    <property type="match status" value="1"/>
</dbReference>
<dbReference type="SMART" id="SM00534">
    <property type="entry name" value="MUTSac"/>
    <property type="match status" value="1"/>
</dbReference>
<dbReference type="SMART" id="SM00533">
    <property type="entry name" value="MUTSd"/>
    <property type="match status" value="1"/>
</dbReference>
<dbReference type="SUPFAM" id="SSF55271">
    <property type="entry name" value="DNA repair protein MutS, domain I"/>
    <property type="match status" value="1"/>
</dbReference>
<dbReference type="SUPFAM" id="SSF53150">
    <property type="entry name" value="DNA repair protein MutS, domain II"/>
    <property type="match status" value="1"/>
</dbReference>
<dbReference type="SUPFAM" id="SSF48334">
    <property type="entry name" value="DNA repair protein MutS, domain III"/>
    <property type="match status" value="1"/>
</dbReference>
<dbReference type="SUPFAM" id="SSF52540">
    <property type="entry name" value="P-loop containing nucleoside triphosphate hydrolases"/>
    <property type="match status" value="1"/>
</dbReference>
<dbReference type="PROSITE" id="PS00486">
    <property type="entry name" value="DNA_MISMATCH_REPAIR_2"/>
    <property type="match status" value="1"/>
</dbReference>
<accession>P0DC60</accession>
<accession>Q8K5J5</accession>
<proteinExistence type="inferred from homology"/>
<keyword id="KW-0067">ATP-binding</keyword>
<keyword id="KW-0227">DNA damage</keyword>
<keyword id="KW-0234">DNA repair</keyword>
<keyword id="KW-0238">DNA-binding</keyword>
<keyword id="KW-0547">Nucleotide-binding</keyword>
<name>MUTS_STRP3</name>
<evidence type="ECO:0000255" key="1">
    <source>
        <dbReference type="HAMAP-Rule" id="MF_00096"/>
    </source>
</evidence>
<protein>
    <recommendedName>
        <fullName evidence="1">DNA mismatch repair protein MutS</fullName>
    </recommendedName>
</protein>